<proteinExistence type="inferred from homology"/>
<protein>
    <recommendedName>
        <fullName evidence="1">UDP-N-acetylmuramate--L-alanine ligase</fullName>
        <ecNumber evidence="1">6.3.2.8</ecNumber>
    </recommendedName>
    <alternativeName>
        <fullName evidence="1">UDP-N-acetylmuramoyl-L-alanine synthetase</fullName>
    </alternativeName>
</protein>
<feature type="chain" id="PRO_0000182087" description="UDP-N-acetylmuramate--L-alanine ligase">
    <location>
        <begin position="1"/>
        <end position="459"/>
    </location>
</feature>
<feature type="binding site" evidence="1">
    <location>
        <begin position="113"/>
        <end position="119"/>
    </location>
    <ligand>
        <name>ATP</name>
        <dbReference type="ChEBI" id="CHEBI:30616"/>
    </ligand>
</feature>
<accession>Q6AJ54</accession>
<keyword id="KW-0067">ATP-binding</keyword>
<keyword id="KW-0131">Cell cycle</keyword>
<keyword id="KW-0132">Cell division</keyword>
<keyword id="KW-0133">Cell shape</keyword>
<keyword id="KW-0961">Cell wall biogenesis/degradation</keyword>
<keyword id="KW-0963">Cytoplasm</keyword>
<keyword id="KW-0436">Ligase</keyword>
<keyword id="KW-0547">Nucleotide-binding</keyword>
<keyword id="KW-0573">Peptidoglycan synthesis</keyword>
<keyword id="KW-1185">Reference proteome</keyword>
<name>MURC_DESPS</name>
<organism>
    <name type="scientific">Desulfotalea psychrophila (strain LSv54 / DSM 12343)</name>
    <dbReference type="NCBI Taxonomy" id="177439"/>
    <lineage>
        <taxon>Bacteria</taxon>
        <taxon>Pseudomonadati</taxon>
        <taxon>Thermodesulfobacteriota</taxon>
        <taxon>Desulfobulbia</taxon>
        <taxon>Desulfobulbales</taxon>
        <taxon>Desulfocapsaceae</taxon>
        <taxon>Desulfotalea</taxon>
    </lineage>
</organism>
<sequence length="459" mass="49546">MYRENHHIHFVGIGGIGMSGIAELLLHLGYSVSGSDLRSSATTKRLQDLGATIYEGHQAASCAGASVVVTSSAVAEDNPEVVQAREDKIPVIPRAEMLAELMRLKTFGIAVAGSHGKTSTTSLIGCLLSQTGFDPTIVVGGKVDSFGGNAKLGEGDFLVAEADESDGSFLKLSPVLEVVTNIDLEHLDYYTDIEHIKETFLSFIDKIPFYGAAIVCLDDENVAAILPQVQKRLITYGLTPQADVSADNLRFAAGRSTFRVRAAGEVLGEISVFPSGTHNVYNALAAVAIGLELEIPFGKIATALASFGGVQRRMQHKGEGKGITVIDDYAHHPTEIRASLKAIKETWPEKRLVVLFQPHRYSRTQALFEEFKTCFHQADCLIMTDIYEASESPIEGVSTEILLEAIKAHGQRYTRHIPEIASLATEVMPNLREGDLVVTLGAGNIVQAGEEICQLLGQE</sequence>
<comment type="function">
    <text evidence="1">Cell wall formation.</text>
</comment>
<comment type="catalytic activity">
    <reaction evidence="1">
        <text>UDP-N-acetyl-alpha-D-muramate + L-alanine + ATP = UDP-N-acetyl-alpha-D-muramoyl-L-alanine + ADP + phosphate + H(+)</text>
        <dbReference type="Rhea" id="RHEA:23372"/>
        <dbReference type="ChEBI" id="CHEBI:15378"/>
        <dbReference type="ChEBI" id="CHEBI:30616"/>
        <dbReference type="ChEBI" id="CHEBI:43474"/>
        <dbReference type="ChEBI" id="CHEBI:57972"/>
        <dbReference type="ChEBI" id="CHEBI:70757"/>
        <dbReference type="ChEBI" id="CHEBI:83898"/>
        <dbReference type="ChEBI" id="CHEBI:456216"/>
        <dbReference type="EC" id="6.3.2.8"/>
    </reaction>
</comment>
<comment type="pathway">
    <text evidence="1">Cell wall biogenesis; peptidoglycan biosynthesis.</text>
</comment>
<comment type="subcellular location">
    <subcellularLocation>
        <location evidence="1">Cytoplasm</location>
    </subcellularLocation>
</comment>
<comment type="similarity">
    <text evidence="1">Belongs to the MurCDEF family.</text>
</comment>
<reference key="1">
    <citation type="journal article" date="2004" name="Environ. Microbiol.">
        <title>The genome of Desulfotalea psychrophila, a sulfate-reducing bacterium from permanently cold Arctic sediments.</title>
        <authorList>
            <person name="Rabus R."/>
            <person name="Ruepp A."/>
            <person name="Frickey T."/>
            <person name="Rattei T."/>
            <person name="Fartmann B."/>
            <person name="Stark M."/>
            <person name="Bauer M."/>
            <person name="Zibat A."/>
            <person name="Lombardot T."/>
            <person name="Becker I."/>
            <person name="Amann J."/>
            <person name="Gellner K."/>
            <person name="Teeling H."/>
            <person name="Leuschner W.D."/>
            <person name="Gloeckner F.-O."/>
            <person name="Lupas A.N."/>
            <person name="Amann R."/>
            <person name="Klenk H.-P."/>
        </authorList>
    </citation>
    <scope>NUCLEOTIDE SEQUENCE [LARGE SCALE GENOMIC DNA]</scope>
    <source>
        <strain>DSM 12343 / LSv54</strain>
    </source>
</reference>
<gene>
    <name evidence="1" type="primary">murC</name>
    <name type="ordered locus">DP2897</name>
</gene>
<evidence type="ECO:0000255" key="1">
    <source>
        <dbReference type="HAMAP-Rule" id="MF_00046"/>
    </source>
</evidence>
<dbReference type="EC" id="6.3.2.8" evidence="1"/>
<dbReference type="EMBL" id="CR522870">
    <property type="protein sequence ID" value="CAG37626.1"/>
    <property type="molecule type" value="Genomic_DNA"/>
</dbReference>
<dbReference type="RefSeq" id="WP_011190138.1">
    <property type="nucleotide sequence ID" value="NC_006138.1"/>
</dbReference>
<dbReference type="SMR" id="Q6AJ54"/>
<dbReference type="STRING" id="177439.DP2897"/>
<dbReference type="KEGG" id="dps:DP2897"/>
<dbReference type="eggNOG" id="COG0773">
    <property type="taxonomic scope" value="Bacteria"/>
</dbReference>
<dbReference type="HOGENOM" id="CLU_028104_2_2_7"/>
<dbReference type="OrthoDB" id="9804126at2"/>
<dbReference type="UniPathway" id="UPA00219"/>
<dbReference type="Proteomes" id="UP000000602">
    <property type="component" value="Chromosome"/>
</dbReference>
<dbReference type="GO" id="GO:0005737">
    <property type="term" value="C:cytoplasm"/>
    <property type="evidence" value="ECO:0007669"/>
    <property type="project" value="UniProtKB-SubCell"/>
</dbReference>
<dbReference type="GO" id="GO:0005524">
    <property type="term" value="F:ATP binding"/>
    <property type="evidence" value="ECO:0007669"/>
    <property type="project" value="UniProtKB-UniRule"/>
</dbReference>
<dbReference type="GO" id="GO:0008763">
    <property type="term" value="F:UDP-N-acetylmuramate-L-alanine ligase activity"/>
    <property type="evidence" value="ECO:0007669"/>
    <property type="project" value="UniProtKB-UniRule"/>
</dbReference>
<dbReference type="GO" id="GO:0051301">
    <property type="term" value="P:cell division"/>
    <property type="evidence" value="ECO:0007669"/>
    <property type="project" value="UniProtKB-KW"/>
</dbReference>
<dbReference type="GO" id="GO:0071555">
    <property type="term" value="P:cell wall organization"/>
    <property type="evidence" value="ECO:0007669"/>
    <property type="project" value="UniProtKB-KW"/>
</dbReference>
<dbReference type="GO" id="GO:0009252">
    <property type="term" value="P:peptidoglycan biosynthetic process"/>
    <property type="evidence" value="ECO:0007669"/>
    <property type="project" value="UniProtKB-UniRule"/>
</dbReference>
<dbReference type="GO" id="GO:0008360">
    <property type="term" value="P:regulation of cell shape"/>
    <property type="evidence" value="ECO:0007669"/>
    <property type="project" value="UniProtKB-KW"/>
</dbReference>
<dbReference type="Gene3D" id="3.90.190.20">
    <property type="entry name" value="Mur ligase, C-terminal domain"/>
    <property type="match status" value="1"/>
</dbReference>
<dbReference type="Gene3D" id="3.40.1190.10">
    <property type="entry name" value="Mur-like, catalytic domain"/>
    <property type="match status" value="1"/>
</dbReference>
<dbReference type="Gene3D" id="3.40.50.720">
    <property type="entry name" value="NAD(P)-binding Rossmann-like Domain"/>
    <property type="match status" value="1"/>
</dbReference>
<dbReference type="HAMAP" id="MF_00046">
    <property type="entry name" value="MurC"/>
    <property type="match status" value="1"/>
</dbReference>
<dbReference type="InterPro" id="IPR036565">
    <property type="entry name" value="Mur-like_cat_sf"/>
</dbReference>
<dbReference type="InterPro" id="IPR004101">
    <property type="entry name" value="Mur_ligase_C"/>
</dbReference>
<dbReference type="InterPro" id="IPR036615">
    <property type="entry name" value="Mur_ligase_C_dom_sf"/>
</dbReference>
<dbReference type="InterPro" id="IPR013221">
    <property type="entry name" value="Mur_ligase_cen"/>
</dbReference>
<dbReference type="InterPro" id="IPR000713">
    <property type="entry name" value="Mur_ligase_N"/>
</dbReference>
<dbReference type="InterPro" id="IPR050061">
    <property type="entry name" value="MurCDEF_pg_biosynth"/>
</dbReference>
<dbReference type="InterPro" id="IPR005758">
    <property type="entry name" value="UDP-N-AcMur_Ala_ligase_MurC"/>
</dbReference>
<dbReference type="NCBIfam" id="TIGR01082">
    <property type="entry name" value="murC"/>
    <property type="match status" value="1"/>
</dbReference>
<dbReference type="PANTHER" id="PTHR43445:SF3">
    <property type="entry name" value="UDP-N-ACETYLMURAMATE--L-ALANINE LIGASE"/>
    <property type="match status" value="1"/>
</dbReference>
<dbReference type="PANTHER" id="PTHR43445">
    <property type="entry name" value="UDP-N-ACETYLMURAMATE--L-ALANINE LIGASE-RELATED"/>
    <property type="match status" value="1"/>
</dbReference>
<dbReference type="Pfam" id="PF01225">
    <property type="entry name" value="Mur_ligase"/>
    <property type="match status" value="1"/>
</dbReference>
<dbReference type="Pfam" id="PF02875">
    <property type="entry name" value="Mur_ligase_C"/>
    <property type="match status" value="1"/>
</dbReference>
<dbReference type="Pfam" id="PF08245">
    <property type="entry name" value="Mur_ligase_M"/>
    <property type="match status" value="1"/>
</dbReference>
<dbReference type="SUPFAM" id="SSF51984">
    <property type="entry name" value="MurCD N-terminal domain"/>
    <property type="match status" value="1"/>
</dbReference>
<dbReference type="SUPFAM" id="SSF53623">
    <property type="entry name" value="MurD-like peptide ligases, catalytic domain"/>
    <property type="match status" value="1"/>
</dbReference>
<dbReference type="SUPFAM" id="SSF53244">
    <property type="entry name" value="MurD-like peptide ligases, peptide-binding domain"/>
    <property type="match status" value="1"/>
</dbReference>